<feature type="chain" id="PRO_0000169904" description="Galactose-1-phosphate uridylyltransferase">
    <location>
        <begin position="1"/>
        <end position="497"/>
    </location>
</feature>
<dbReference type="EC" id="2.7.7.12" evidence="1"/>
<dbReference type="EMBL" id="AE016830">
    <property type="protein sequence ID" value="AAO80873.1"/>
    <property type="molecule type" value="Genomic_DNA"/>
</dbReference>
<dbReference type="RefSeq" id="NP_814803.1">
    <property type="nucleotide sequence ID" value="NC_004668.1"/>
</dbReference>
<dbReference type="STRING" id="226185.EF_1071"/>
<dbReference type="EnsemblBacteria" id="AAO80873">
    <property type="protein sequence ID" value="AAO80873"/>
    <property type="gene ID" value="EF_1071"/>
</dbReference>
<dbReference type="KEGG" id="efa:EF1071"/>
<dbReference type="PATRIC" id="fig|226185.45.peg.2423"/>
<dbReference type="eggNOG" id="COG4468">
    <property type="taxonomic scope" value="Bacteria"/>
</dbReference>
<dbReference type="HOGENOM" id="CLU_047799_0_0_9"/>
<dbReference type="UniPathway" id="UPA00214"/>
<dbReference type="Proteomes" id="UP000001415">
    <property type="component" value="Chromosome"/>
</dbReference>
<dbReference type="GO" id="GO:0005737">
    <property type="term" value="C:cytoplasm"/>
    <property type="evidence" value="ECO:0007669"/>
    <property type="project" value="UniProtKB-SubCell"/>
</dbReference>
<dbReference type="GO" id="GO:0008108">
    <property type="term" value="F:UDP-glucose:hexose-1-phosphate uridylyltransferase activity"/>
    <property type="evidence" value="ECO:0007669"/>
    <property type="project" value="UniProtKB-UniRule"/>
</dbReference>
<dbReference type="GO" id="GO:0006012">
    <property type="term" value="P:galactose metabolic process"/>
    <property type="evidence" value="ECO:0007669"/>
    <property type="project" value="UniProtKB-UniRule"/>
</dbReference>
<dbReference type="HAMAP" id="MF_00571">
    <property type="entry name" value="GalP_UDP_trans"/>
    <property type="match status" value="1"/>
</dbReference>
<dbReference type="InterPro" id="IPR000766">
    <property type="entry name" value="GalP_uridyl_Trfase_II"/>
</dbReference>
<dbReference type="InterPro" id="IPR023425">
    <property type="entry name" value="GalP_uridyl_Trfase_II_CS"/>
</dbReference>
<dbReference type="InterPro" id="IPR005850">
    <property type="entry name" value="GalP_Utransf_C"/>
</dbReference>
<dbReference type="InterPro" id="IPR005849">
    <property type="entry name" value="GalP_Utransf_N"/>
</dbReference>
<dbReference type="NCBIfam" id="TIGR01239">
    <property type="entry name" value="galT_2"/>
    <property type="match status" value="1"/>
</dbReference>
<dbReference type="NCBIfam" id="NF003629">
    <property type="entry name" value="PRK05270.1-2"/>
    <property type="match status" value="1"/>
</dbReference>
<dbReference type="NCBIfam" id="NF003633">
    <property type="entry name" value="PRK05270.2-2"/>
    <property type="match status" value="1"/>
</dbReference>
<dbReference type="PANTHER" id="PTHR39191:SF1">
    <property type="entry name" value="DUF4922 DOMAIN-CONTAINING PROTEIN"/>
    <property type="match status" value="1"/>
</dbReference>
<dbReference type="PANTHER" id="PTHR39191">
    <property type="entry name" value="GALACTOSE-1-PHOSPHATE URIDYLYLTRANSFERASE"/>
    <property type="match status" value="1"/>
</dbReference>
<dbReference type="Pfam" id="PF02744">
    <property type="entry name" value="GalP_UDP_tr_C"/>
    <property type="match status" value="1"/>
</dbReference>
<dbReference type="Pfam" id="PF01087">
    <property type="entry name" value="GalP_UDP_transf"/>
    <property type="match status" value="1"/>
</dbReference>
<dbReference type="PIRSF" id="PIRSF006005">
    <property type="entry name" value="GalT_BS"/>
    <property type="match status" value="1"/>
</dbReference>
<dbReference type="PROSITE" id="PS01163">
    <property type="entry name" value="GAL_P_UDP_TRANSF_II"/>
    <property type="match status" value="1"/>
</dbReference>
<gene>
    <name evidence="1" type="primary">galT</name>
    <name type="ordered locus">EF_1071</name>
</gene>
<reference key="1">
    <citation type="journal article" date="2003" name="Science">
        <title>Role of mobile DNA in the evolution of vancomycin-resistant Enterococcus faecalis.</title>
        <authorList>
            <person name="Paulsen I.T."/>
            <person name="Banerjei L."/>
            <person name="Myers G.S.A."/>
            <person name="Nelson K.E."/>
            <person name="Seshadri R."/>
            <person name="Read T.D."/>
            <person name="Fouts D.E."/>
            <person name="Eisen J.A."/>
            <person name="Gill S.R."/>
            <person name="Heidelberg J.F."/>
            <person name="Tettelin H."/>
            <person name="Dodson R.J."/>
            <person name="Umayam L.A."/>
            <person name="Brinkac L.M."/>
            <person name="Beanan M.J."/>
            <person name="Daugherty S.C."/>
            <person name="DeBoy R.T."/>
            <person name="Durkin S.A."/>
            <person name="Kolonay J.F."/>
            <person name="Madupu R."/>
            <person name="Nelson W.C."/>
            <person name="Vamathevan J.J."/>
            <person name="Tran B."/>
            <person name="Upton J."/>
            <person name="Hansen T."/>
            <person name="Shetty J."/>
            <person name="Khouri H.M."/>
            <person name="Utterback T.R."/>
            <person name="Radune D."/>
            <person name="Ketchum K.A."/>
            <person name="Dougherty B.A."/>
            <person name="Fraser C.M."/>
        </authorList>
    </citation>
    <scope>NUCLEOTIDE SEQUENCE [LARGE SCALE GENOMIC DNA]</scope>
    <source>
        <strain>ATCC 700802 / V583</strain>
    </source>
</reference>
<name>GALT_ENTFA</name>
<accession>Q836N8</accession>
<evidence type="ECO:0000255" key="1">
    <source>
        <dbReference type="HAMAP-Rule" id="MF_00571"/>
    </source>
</evidence>
<organism>
    <name type="scientific">Enterococcus faecalis (strain ATCC 700802 / V583)</name>
    <dbReference type="NCBI Taxonomy" id="226185"/>
    <lineage>
        <taxon>Bacteria</taxon>
        <taxon>Bacillati</taxon>
        <taxon>Bacillota</taxon>
        <taxon>Bacilli</taxon>
        <taxon>Lactobacillales</taxon>
        <taxon>Enterococcaceae</taxon>
        <taxon>Enterococcus</taxon>
    </lineage>
</organism>
<protein>
    <recommendedName>
        <fullName evidence="1">Galactose-1-phosphate uridylyltransferase</fullName>
        <shortName evidence="1">Gal-1-P uridylyltransferase</shortName>
        <ecNumber evidence="1">2.7.7.12</ecNumber>
    </recommendedName>
    <alternativeName>
        <fullName evidence="1">UDP-glucose--hexose-1-phosphate uridylyltransferase</fullName>
    </alternativeName>
</protein>
<proteinExistence type="inferred from homology"/>
<keyword id="KW-0119">Carbohydrate metabolism</keyword>
<keyword id="KW-0963">Cytoplasm</keyword>
<keyword id="KW-0299">Galactose metabolism</keyword>
<keyword id="KW-0548">Nucleotidyltransferase</keyword>
<keyword id="KW-1185">Reference proteome</keyword>
<keyword id="KW-0808">Transferase</keyword>
<sequence>MMKESSKWIAAFVEIIIENGDWTETDRYYLTNRIAKLVGCDFFEQPEAVACEQEPLRVVEHLLNIAQANHQIDDSITEAEQLEAELMDFITPTPTIINQKFMDYYQESPRKATDYFYQLCKTNNYIKTKAIAKNIIFPMDSPYGKLEITINLSKPEKDARKILAEKKMSQKKYPACMLCMENEGYYGRVNYPARTNHRIIRLNLEDEAWGFQYSPYAYYNEHAIFLDQQHREMKIEKKTFQRLLKITELFPEYFVGSNADLPIVGGSILSHDHYQAGRHTFPMDLAPMEKRFSLKKYPEITAGILKWPMSVIRLQSDRQEELVEAAELILTKWRNYSDERVSVRAYSKDGTPHHTITPIARRKGSLFELDLVLRDNNVSEEFPDGIFHPHPEVQHIKQENIGLIEVMGLAILPPRLAQELREVEKYLLKQPNQIAESHRAWADELSQQTITEANVKEVIQQGIGTIFVQILTDAGVFKRDEEGRRAFERFIQCIEND</sequence>
<comment type="catalytic activity">
    <reaction evidence="1">
        <text>alpha-D-galactose 1-phosphate + UDP-alpha-D-glucose = alpha-D-glucose 1-phosphate + UDP-alpha-D-galactose</text>
        <dbReference type="Rhea" id="RHEA:13989"/>
        <dbReference type="ChEBI" id="CHEBI:58336"/>
        <dbReference type="ChEBI" id="CHEBI:58601"/>
        <dbReference type="ChEBI" id="CHEBI:58885"/>
        <dbReference type="ChEBI" id="CHEBI:66914"/>
        <dbReference type="EC" id="2.7.7.12"/>
    </reaction>
</comment>
<comment type="pathway">
    <text evidence="1">Carbohydrate metabolism; galactose metabolism.</text>
</comment>
<comment type="subcellular location">
    <subcellularLocation>
        <location evidence="1">Cytoplasm</location>
    </subcellularLocation>
</comment>
<comment type="similarity">
    <text evidence="1">Belongs to the galactose-1-phosphate uridylyltransferase type 2 family.</text>
</comment>